<reference key="1">
    <citation type="book" date="2006" name="Gram positive pathogens, 2nd edition">
        <title>The Staphylococcus aureus NCTC 8325 genome.</title>
        <editorList>
            <person name="Fischetti V."/>
            <person name="Novick R."/>
            <person name="Ferretti J."/>
            <person name="Portnoy D."/>
            <person name="Rood J."/>
        </editorList>
        <authorList>
            <person name="Gillaspy A.F."/>
            <person name="Worrell V."/>
            <person name="Orvis J."/>
            <person name="Roe B.A."/>
            <person name="Dyer D.W."/>
            <person name="Iandolo J.J."/>
        </authorList>
    </citation>
    <scope>NUCLEOTIDE SEQUENCE [LARGE SCALE GENOMIC DNA]</scope>
    <source>
        <strain>NCTC 8325 / PS 47</strain>
    </source>
</reference>
<reference key="2">
    <citation type="journal article" date="2008" name="J. Bacteriol.">
        <title>Characterization of the accessory Sec system of Staphylococcus aureus.</title>
        <authorList>
            <person name="Siboo I.R."/>
            <person name="Chaffin D.O."/>
            <person name="Rubens C.E."/>
            <person name="Sullam P.M."/>
        </authorList>
    </citation>
    <scope>FUNCTION</scope>
    <scope>DISRUPTION PHENOTYPE</scope>
    <source>
        <strain>ISP479C</strain>
    </source>
</reference>
<accession>Q2FUW4</accession>
<feature type="chain" id="PRO_0000414197" description="Accessory Sec system protein Asp2">
    <location>
        <begin position="1"/>
        <end position="522"/>
    </location>
</feature>
<dbReference type="EMBL" id="CP000253">
    <property type="protein sequence ID" value="ABD31974.1"/>
    <property type="molecule type" value="Genomic_DNA"/>
</dbReference>
<dbReference type="RefSeq" id="WP_001137474.1">
    <property type="nucleotide sequence ID" value="NZ_LS483365.1"/>
</dbReference>
<dbReference type="RefSeq" id="YP_501436.1">
    <property type="nucleotide sequence ID" value="NC_007795.1"/>
</dbReference>
<dbReference type="SMR" id="Q2FUW4"/>
<dbReference type="STRING" id="93061.SAOUHSC_02987"/>
<dbReference type="ESTHER" id="staa8-asp2">
    <property type="family name" value="Asp2"/>
</dbReference>
<dbReference type="PaxDb" id="1280-SAXN108_2922"/>
<dbReference type="GeneID" id="3921469"/>
<dbReference type="KEGG" id="sao:SAOUHSC_02987"/>
<dbReference type="PATRIC" id="fig|93061.5.peg.2694"/>
<dbReference type="eggNOG" id="COG1073">
    <property type="taxonomic scope" value="Bacteria"/>
</dbReference>
<dbReference type="HOGENOM" id="CLU_041140_1_0_9"/>
<dbReference type="OrthoDB" id="9768578at2"/>
<dbReference type="PRO" id="PR:Q2FUW4"/>
<dbReference type="Proteomes" id="UP000008816">
    <property type="component" value="Chromosome"/>
</dbReference>
<dbReference type="GO" id="GO:0015031">
    <property type="term" value="P:protein transport"/>
    <property type="evidence" value="ECO:0007669"/>
    <property type="project" value="UniProtKB-KW"/>
</dbReference>
<dbReference type="InterPro" id="IPR029058">
    <property type="entry name" value="AB_hydrolase_fold"/>
</dbReference>
<dbReference type="InterPro" id="IPR022267">
    <property type="entry name" value="Asp2"/>
</dbReference>
<dbReference type="NCBIfam" id="TIGR03712">
    <property type="entry name" value="acc_sec_asp2"/>
    <property type="match status" value="1"/>
</dbReference>
<dbReference type="Pfam" id="PF16929">
    <property type="entry name" value="Asp2"/>
    <property type="match status" value="1"/>
</dbReference>
<dbReference type="SUPFAM" id="SSF53474">
    <property type="entry name" value="alpha/beta-Hydrolases"/>
    <property type="match status" value="1"/>
</dbReference>
<comment type="function">
    <text evidence="1">Part of the accessory SecA2/SecY2 system specifically required to export SraP, a serine-rich repeat cell wall protein encoded upstream in the same operon.</text>
</comment>
<comment type="subunit">
    <text>Part of the accessory SecA2/SecY2 protein translocation apparatus required to export cell wall protein SraP.</text>
</comment>
<comment type="disruption phenotype">
    <text evidence="1">No effect on cell growth, significantly reduces export of the cell wall protein SraP. The small amount that is exported seems to be glycosylated normally.</text>
</comment>
<comment type="similarity">
    <text evidence="2">Belongs to the accessory Sec system protein Asp2 family.</text>
</comment>
<proteinExistence type="inferred from homology"/>
<evidence type="ECO:0000269" key="1">
    <source>
    </source>
</evidence>
<evidence type="ECO:0000305" key="2"/>
<sequence>MPRKFRVLQIGGDDLEPIFQHKKGVSWDYFDIGLFEFDSGYVEAIEAIVEAEGRFDFIYIQAPYSETLTNLLQMISEPYNTYVDESFWSVEYEQDENVQKYVVQPLHYRNIEERNNKLEAVSFSGQYGDKVSPKLALVHPNFKGDVVYQGNSELTLSGEFGKEFKPIASWQNNLVYDKDKVIQIWPEFDIDGAVELQYTFRLIQTGADGALIEQIVLTDDMLDSPLEIPAKPFDAYISVTVKARGNGTVHLGPIHKRWSRLDMGQFLLGGSRFVDSQRQEFIYYFHPGDMKPPLNVYFSGYRTAEGFEGYYMMKRMNAPFLLIGDPRVEGGSFYIGSSEYEQGIINVIDETLEKLNFKSHELILSGLSMGSFGALYYGAQLNPQAIIVGKPLVNIGTIAEHMRLLRPEEFGTALDVLVSNEGDTSQASIQALNQKFWQTFQKKSLSQTVFAIAYMQHDDYDPHAFQELLPVLTAHQARVMNRSIPGRHNDDSPTIASWFVNFYNIILEDKFGRVQHAEKQNI</sequence>
<protein>
    <recommendedName>
        <fullName>Accessory Sec system protein Asp2</fullName>
    </recommendedName>
    <alternativeName>
        <fullName>Accessory secretory protein Asp2</fullName>
    </alternativeName>
</protein>
<gene>
    <name type="primary">asp2</name>
    <name type="ordered locus">SAOUHSC_02987</name>
</gene>
<name>ASP2_STAA8</name>
<keyword id="KW-0653">Protein transport</keyword>
<keyword id="KW-1185">Reference proteome</keyword>
<keyword id="KW-0811">Translocation</keyword>
<keyword id="KW-0813">Transport</keyword>
<organism>
    <name type="scientific">Staphylococcus aureus (strain NCTC 8325 / PS 47)</name>
    <dbReference type="NCBI Taxonomy" id="93061"/>
    <lineage>
        <taxon>Bacteria</taxon>
        <taxon>Bacillati</taxon>
        <taxon>Bacillota</taxon>
        <taxon>Bacilli</taxon>
        <taxon>Bacillales</taxon>
        <taxon>Staphylococcaceae</taxon>
        <taxon>Staphylococcus</taxon>
    </lineage>
</organism>